<comment type="function">
    <text evidence="1">Functions by promoting the formation of the first peptide bond.</text>
</comment>
<comment type="subcellular location">
    <subcellularLocation>
        <location evidence="1">Cytoplasm</location>
    </subcellularLocation>
</comment>
<comment type="similarity">
    <text evidence="1">Belongs to the eIF-5A family.</text>
</comment>
<accession>C3NDW5</accession>
<organism>
    <name type="scientific">Saccharolobus islandicus (strain Y.G.57.14 / Yellowstone #1)</name>
    <name type="common">Sulfolobus islandicus</name>
    <dbReference type="NCBI Taxonomy" id="439386"/>
    <lineage>
        <taxon>Archaea</taxon>
        <taxon>Thermoproteota</taxon>
        <taxon>Thermoprotei</taxon>
        <taxon>Sulfolobales</taxon>
        <taxon>Sulfolobaceae</taxon>
        <taxon>Saccharolobus</taxon>
    </lineage>
</organism>
<evidence type="ECO:0000255" key="1">
    <source>
        <dbReference type="HAMAP-Rule" id="MF_00085"/>
    </source>
</evidence>
<gene>
    <name type="primary">eIF5A</name>
    <name type="ordered locus">YG5714_1238</name>
</gene>
<sequence length="131" mass="14535">MSITYTTVGELKVGSYVVIDGEPCRVVEVTKAKTGKHGSAKANVVAIGVFSGAKKTLMAPVDQQVEVPIIEKHIGQIIADMGDKIQVMDLETYETFEIEKPTEDELASKIRPNAELEYWEIMGRRKIVRVK</sequence>
<proteinExistence type="inferred from homology"/>
<name>IF5A_SACI7</name>
<reference key="1">
    <citation type="journal article" date="2009" name="Proc. Natl. Acad. Sci. U.S.A.">
        <title>Biogeography of the Sulfolobus islandicus pan-genome.</title>
        <authorList>
            <person name="Reno M.L."/>
            <person name="Held N.L."/>
            <person name="Fields C.J."/>
            <person name="Burke P.V."/>
            <person name="Whitaker R.J."/>
        </authorList>
    </citation>
    <scope>NUCLEOTIDE SEQUENCE [LARGE SCALE GENOMIC DNA]</scope>
    <source>
        <strain>Y.G.57.14 / Yellowstone #1</strain>
    </source>
</reference>
<keyword id="KW-0963">Cytoplasm</keyword>
<keyword id="KW-0385">Hypusine</keyword>
<keyword id="KW-0396">Initiation factor</keyword>
<keyword id="KW-0648">Protein biosynthesis</keyword>
<protein>
    <recommendedName>
        <fullName evidence="1">Translation initiation factor 5A</fullName>
    </recommendedName>
    <alternativeName>
        <fullName evidence="1">Hypusine-containing protein</fullName>
    </alternativeName>
    <alternativeName>
        <fullName evidence="1">eIF-5A</fullName>
    </alternativeName>
</protein>
<dbReference type="EMBL" id="CP001403">
    <property type="protein sequence ID" value="ACP45504.1"/>
    <property type="molecule type" value="Genomic_DNA"/>
</dbReference>
<dbReference type="RefSeq" id="WP_012711261.1">
    <property type="nucleotide sequence ID" value="NC_012622.1"/>
</dbReference>
<dbReference type="SMR" id="C3NDW5"/>
<dbReference type="KEGG" id="siy:YG5714_1238"/>
<dbReference type="HOGENOM" id="CLU_102600_3_0_2"/>
<dbReference type="Proteomes" id="UP000002308">
    <property type="component" value="Chromosome"/>
</dbReference>
<dbReference type="GO" id="GO:0005737">
    <property type="term" value="C:cytoplasm"/>
    <property type="evidence" value="ECO:0007669"/>
    <property type="project" value="UniProtKB-SubCell"/>
</dbReference>
<dbReference type="GO" id="GO:0043022">
    <property type="term" value="F:ribosome binding"/>
    <property type="evidence" value="ECO:0007669"/>
    <property type="project" value="InterPro"/>
</dbReference>
<dbReference type="GO" id="GO:0003723">
    <property type="term" value="F:RNA binding"/>
    <property type="evidence" value="ECO:0007669"/>
    <property type="project" value="InterPro"/>
</dbReference>
<dbReference type="GO" id="GO:0003746">
    <property type="term" value="F:translation elongation factor activity"/>
    <property type="evidence" value="ECO:0007669"/>
    <property type="project" value="InterPro"/>
</dbReference>
<dbReference type="GO" id="GO:0003743">
    <property type="term" value="F:translation initiation factor activity"/>
    <property type="evidence" value="ECO:0007669"/>
    <property type="project" value="UniProtKB-UniRule"/>
</dbReference>
<dbReference type="GO" id="GO:0045901">
    <property type="term" value="P:positive regulation of translational elongation"/>
    <property type="evidence" value="ECO:0007669"/>
    <property type="project" value="InterPro"/>
</dbReference>
<dbReference type="GO" id="GO:0045905">
    <property type="term" value="P:positive regulation of translational termination"/>
    <property type="evidence" value="ECO:0007669"/>
    <property type="project" value="InterPro"/>
</dbReference>
<dbReference type="CDD" id="cd04467">
    <property type="entry name" value="S1_aIF5A"/>
    <property type="match status" value="1"/>
</dbReference>
<dbReference type="FunFam" id="2.30.30.30:FF:000038">
    <property type="entry name" value="Translation initiation factor 5A"/>
    <property type="match status" value="1"/>
</dbReference>
<dbReference type="FunFam" id="2.40.50.140:FF:000334">
    <property type="entry name" value="Translation initiation factor 5A"/>
    <property type="match status" value="1"/>
</dbReference>
<dbReference type="Gene3D" id="2.30.30.30">
    <property type="match status" value="1"/>
</dbReference>
<dbReference type="Gene3D" id="2.40.50.140">
    <property type="entry name" value="Nucleic acid-binding proteins"/>
    <property type="match status" value="1"/>
</dbReference>
<dbReference type="HAMAP" id="MF_00085">
    <property type="entry name" value="eIF_5A"/>
    <property type="match status" value="1"/>
</dbReference>
<dbReference type="InterPro" id="IPR001884">
    <property type="entry name" value="IF5A-like"/>
</dbReference>
<dbReference type="InterPro" id="IPR048670">
    <property type="entry name" value="IF5A-like_N"/>
</dbReference>
<dbReference type="InterPro" id="IPR012340">
    <property type="entry name" value="NA-bd_OB-fold"/>
</dbReference>
<dbReference type="InterPro" id="IPR014722">
    <property type="entry name" value="Rib_uL2_dom2"/>
</dbReference>
<dbReference type="InterPro" id="IPR019769">
    <property type="entry name" value="Trans_elong_IF5A_hypusine_site"/>
</dbReference>
<dbReference type="InterPro" id="IPR022847">
    <property type="entry name" value="Transl_elong_IF5A_arc"/>
</dbReference>
<dbReference type="InterPro" id="IPR020189">
    <property type="entry name" value="Transl_elong_IF5A_C"/>
</dbReference>
<dbReference type="InterPro" id="IPR008991">
    <property type="entry name" value="Translation_prot_SH3-like_sf"/>
</dbReference>
<dbReference type="NCBIfam" id="TIGR00037">
    <property type="entry name" value="eIF_5A"/>
    <property type="match status" value="1"/>
</dbReference>
<dbReference type="NCBIfam" id="NF003076">
    <property type="entry name" value="PRK03999.1"/>
    <property type="match status" value="1"/>
</dbReference>
<dbReference type="PANTHER" id="PTHR11673">
    <property type="entry name" value="TRANSLATION INITIATION FACTOR 5A FAMILY MEMBER"/>
    <property type="match status" value="1"/>
</dbReference>
<dbReference type="Pfam" id="PF01287">
    <property type="entry name" value="eIF-5a"/>
    <property type="match status" value="1"/>
</dbReference>
<dbReference type="Pfam" id="PF21485">
    <property type="entry name" value="IF5A-like_N"/>
    <property type="match status" value="1"/>
</dbReference>
<dbReference type="PIRSF" id="PIRSF003025">
    <property type="entry name" value="eIF5A"/>
    <property type="match status" value="1"/>
</dbReference>
<dbReference type="SMART" id="SM01376">
    <property type="entry name" value="eIF-5a"/>
    <property type="match status" value="1"/>
</dbReference>
<dbReference type="SUPFAM" id="SSF50249">
    <property type="entry name" value="Nucleic acid-binding proteins"/>
    <property type="match status" value="1"/>
</dbReference>
<dbReference type="SUPFAM" id="SSF50104">
    <property type="entry name" value="Translation proteins SH3-like domain"/>
    <property type="match status" value="1"/>
</dbReference>
<dbReference type="PROSITE" id="PS00302">
    <property type="entry name" value="IF5A_HYPUSINE"/>
    <property type="match status" value="1"/>
</dbReference>
<feature type="chain" id="PRO_1000202608" description="Translation initiation factor 5A">
    <location>
        <begin position="1"/>
        <end position="131"/>
    </location>
</feature>
<feature type="modified residue" description="Hypusine" evidence="1">
    <location>
        <position position="36"/>
    </location>
</feature>